<name>SSPI_GEOSW</name>
<organism>
    <name type="scientific">Geobacillus sp. (strain WCH70)</name>
    <dbReference type="NCBI Taxonomy" id="471223"/>
    <lineage>
        <taxon>Bacteria</taxon>
        <taxon>Bacillati</taxon>
        <taxon>Bacillota</taxon>
        <taxon>Bacilli</taxon>
        <taxon>Bacillales</taxon>
        <taxon>Anoxybacillaceae</taxon>
        <taxon>Geobacillus</taxon>
    </lineage>
</organism>
<protein>
    <recommendedName>
        <fullName evidence="1">Small, acid-soluble spore protein I</fullName>
        <shortName evidence="1">SASP I</shortName>
    </recommendedName>
</protein>
<proteinExistence type="inferred from homology"/>
<dbReference type="EMBL" id="CP001638">
    <property type="protein sequence ID" value="ACS25346.1"/>
    <property type="molecule type" value="Genomic_DNA"/>
</dbReference>
<dbReference type="STRING" id="471223.GWCH70_2652"/>
<dbReference type="KEGG" id="gwc:GWCH70_2652"/>
<dbReference type="eggNOG" id="ENOG5032YQ7">
    <property type="taxonomic scope" value="Bacteria"/>
</dbReference>
<dbReference type="HOGENOM" id="CLU_188877_0_0_9"/>
<dbReference type="OrthoDB" id="2453696at2"/>
<dbReference type="GO" id="GO:0030436">
    <property type="term" value="P:asexual sporulation"/>
    <property type="evidence" value="ECO:0007669"/>
    <property type="project" value="UniProtKB-UniRule"/>
</dbReference>
<dbReference type="GO" id="GO:0030435">
    <property type="term" value="P:sporulation resulting in formation of a cellular spore"/>
    <property type="evidence" value="ECO:0007669"/>
    <property type="project" value="UniProtKB-KW"/>
</dbReference>
<dbReference type="HAMAP" id="MF_00669">
    <property type="entry name" value="SspI"/>
    <property type="match status" value="1"/>
</dbReference>
<dbReference type="InterPro" id="IPR017525">
    <property type="entry name" value="SspI"/>
</dbReference>
<dbReference type="NCBIfam" id="TIGR03092">
    <property type="entry name" value="SASP_sspI"/>
    <property type="match status" value="1"/>
</dbReference>
<dbReference type="Pfam" id="PF14098">
    <property type="entry name" value="SSPI"/>
    <property type="match status" value="1"/>
</dbReference>
<gene>
    <name evidence="1" type="primary">sspI</name>
    <name type="ordered locus">GWCH70_2652</name>
</gene>
<accession>C5D630</accession>
<reference key="1">
    <citation type="submission" date="2009-06" db="EMBL/GenBank/DDBJ databases">
        <title>Complete sequence of chromosome of Geopacillus sp. WCH70.</title>
        <authorList>
            <consortium name="US DOE Joint Genome Institute"/>
            <person name="Lucas S."/>
            <person name="Copeland A."/>
            <person name="Lapidus A."/>
            <person name="Glavina del Rio T."/>
            <person name="Dalin E."/>
            <person name="Tice H."/>
            <person name="Bruce D."/>
            <person name="Goodwin L."/>
            <person name="Pitluck S."/>
            <person name="Chertkov O."/>
            <person name="Brettin T."/>
            <person name="Detter J.C."/>
            <person name="Han C."/>
            <person name="Larimer F."/>
            <person name="Land M."/>
            <person name="Hauser L."/>
            <person name="Kyrpides N."/>
            <person name="Mikhailova N."/>
            <person name="Brumm P."/>
            <person name="Mead D.A."/>
            <person name="Richardson P."/>
        </authorList>
    </citation>
    <scope>NUCLEOTIDE SEQUENCE [LARGE SCALE GENOMIC DNA]</scope>
    <source>
        <strain>WCH70</strain>
    </source>
</reference>
<keyword id="KW-0749">Sporulation</keyword>
<sequence>MDLNLRHAVIQNIANNTKEQLEDTIVDAIQRGEEKYLPGLGVLFEEIWKHSSEQQKEEMLTTLEQAVKQHA</sequence>
<evidence type="ECO:0000255" key="1">
    <source>
        <dbReference type="HAMAP-Rule" id="MF_00669"/>
    </source>
</evidence>
<feature type="chain" id="PRO_1000212504" description="Small, acid-soluble spore protein I">
    <location>
        <begin position="1"/>
        <end position="71"/>
    </location>
</feature>
<comment type="subcellular location">
    <subcellularLocation>
        <location evidence="1">Spore core</location>
    </subcellularLocation>
</comment>
<comment type="induction">
    <text evidence="1">Expressed only in the forespore compartment of sporulating cells.</text>
</comment>
<comment type="similarity">
    <text evidence="1">Belongs to the SspI family.</text>
</comment>